<reference key="1">
    <citation type="journal article" date="2004" name="Proc. Natl. Acad. Sci. U.S.A.">
        <title>Insights into the evolution of Yersinia pestis through whole-genome comparison with Yersinia pseudotuberculosis.</title>
        <authorList>
            <person name="Chain P.S.G."/>
            <person name="Carniel E."/>
            <person name="Larimer F.W."/>
            <person name="Lamerdin J."/>
            <person name="Stoutland P.O."/>
            <person name="Regala W.M."/>
            <person name="Georgescu A.M."/>
            <person name="Vergez L.M."/>
            <person name="Land M.L."/>
            <person name="Motin V.L."/>
            <person name="Brubaker R.R."/>
            <person name="Fowler J."/>
            <person name="Hinnebusch J."/>
            <person name="Marceau M."/>
            <person name="Medigue C."/>
            <person name="Simonet M."/>
            <person name="Chenal-Francisque V."/>
            <person name="Souza B."/>
            <person name="Dacheux D."/>
            <person name="Elliott J.M."/>
            <person name="Derbise A."/>
            <person name="Hauser L.J."/>
            <person name="Garcia E."/>
        </authorList>
    </citation>
    <scope>NUCLEOTIDE SEQUENCE [LARGE SCALE GENOMIC DNA]</scope>
    <source>
        <strain>IP32953</strain>
    </source>
</reference>
<protein>
    <recommendedName>
        <fullName evidence="1">Acetylornithine deacetylase</fullName>
        <shortName evidence="1">AO</shortName>
        <shortName evidence="1">Acetylornithinase</shortName>
        <ecNumber evidence="1">3.5.1.16</ecNumber>
    </recommendedName>
    <alternativeName>
        <fullName evidence="1">N-acetylornithinase</fullName>
        <shortName evidence="1">NAO</shortName>
    </alternativeName>
</protein>
<gene>
    <name evidence="1" type="primary">argE</name>
    <name type="ordered locus">YPTB0109</name>
</gene>
<comment type="function">
    <text evidence="1">Catalyzes the hydrolysis of the amide bond of N(2)-acetylated L-amino acids. Cleaves the acetyl group from N-acetyl-L-ornithine to form L-ornithine, an intermediate in L-arginine biosynthesis pathway, and a branchpoint in the synthesis of polyamines.</text>
</comment>
<comment type="catalytic activity">
    <reaction evidence="1">
        <text>N(2)-acetyl-L-ornithine + H2O = L-ornithine + acetate</text>
        <dbReference type="Rhea" id="RHEA:15941"/>
        <dbReference type="ChEBI" id="CHEBI:15377"/>
        <dbReference type="ChEBI" id="CHEBI:30089"/>
        <dbReference type="ChEBI" id="CHEBI:46911"/>
        <dbReference type="ChEBI" id="CHEBI:57805"/>
        <dbReference type="EC" id="3.5.1.16"/>
    </reaction>
</comment>
<comment type="cofactor">
    <cofactor evidence="1">
        <name>Zn(2+)</name>
        <dbReference type="ChEBI" id="CHEBI:29105"/>
    </cofactor>
    <cofactor evidence="1">
        <name>Co(2+)</name>
        <dbReference type="ChEBI" id="CHEBI:48828"/>
    </cofactor>
    <text evidence="1">Binds 2 Zn(2+) or Co(2+) ions per subunit.</text>
</comment>
<comment type="cofactor">
    <cofactor evidence="1">
        <name>glutathione</name>
        <dbReference type="ChEBI" id="CHEBI:57925"/>
    </cofactor>
</comment>
<comment type="pathway">
    <text evidence="1">Amino-acid biosynthesis; L-arginine biosynthesis; L-ornithine from N(2)-acetyl-L-ornithine (linear): step 1/1.</text>
</comment>
<comment type="subunit">
    <text evidence="1">Homodimer.</text>
</comment>
<comment type="subcellular location">
    <subcellularLocation>
        <location evidence="1">Cytoplasm</location>
    </subcellularLocation>
</comment>
<comment type="similarity">
    <text evidence="1">Belongs to the peptidase M20A family. ArgE subfamily.</text>
</comment>
<dbReference type="EC" id="3.5.1.16" evidence="1"/>
<dbReference type="EMBL" id="BX936398">
    <property type="protein sequence ID" value="CAH19349.1"/>
    <property type="molecule type" value="Genomic_DNA"/>
</dbReference>
<dbReference type="SMR" id="Q66G73"/>
<dbReference type="MEROPS" id="M20.974"/>
<dbReference type="KEGG" id="yps:YPTB0109"/>
<dbReference type="UniPathway" id="UPA00068">
    <property type="reaction ID" value="UER00110"/>
</dbReference>
<dbReference type="Proteomes" id="UP000001011">
    <property type="component" value="Chromosome"/>
</dbReference>
<dbReference type="GO" id="GO:0005737">
    <property type="term" value="C:cytoplasm"/>
    <property type="evidence" value="ECO:0007669"/>
    <property type="project" value="UniProtKB-SubCell"/>
</dbReference>
<dbReference type="GO" id="GO:0008777">
    <property type="term" value="F:acetylornithine deacetylase activity"/>
    <property type="evidence" value="ECO:0007669"/>
    <property type="project" value="UniProtKB-UniRule"/>
</dbReference>
<dbReference type="GO" id="GO:0008270">
    <property type="term" value="F:zinc ion binding"/>
    <property type="evidence" value="ECO:0007669"/>
    <property type="project" value="UniProtKB-UniRule"/>
</dbReference>
<dbReference type="GO" id="GO:0006526">
    <property type="term" value="P:L-arginine biosynthetic process"/>
    <property type="evidence" value="ECO:0007669"/>
    <property type="project" value="UniProtKB-UniRule"/>
</dbReference>
<dbReference type="CDD" id="cd03894">
    <property type="entry name" value="M20_ArgE"/>
    <property type="match status" value="1"/>
</dbReference>
<dbReference type="FunFam" id="3.30.70.360:FF:000003">
    <property type="entry name" value="Acetylornithine deacetylase"/>
    <property type="match status" value="1"/>
</dbReference>
<dbReference type="Gene3D" id="3.30.70.360">
    <property type="match status" value="1"/>
</dbReference>
<dbReference type="Gene3D" id="3.40.630.10">
    <property type="entry name" value="Zn peptidases"/>
    <property type="match status" value="1"/>
</dbReference>
<dbReference type="HAMAP" id="MF_01108">
    <property type="entry name" value="ArgE"/>
    <property type="match status" value="1"/>
</dbReference>
<dbReference type="InterPro" id="IPR010169">
    <property type="entry name" value="AcOrn-deacetyl"/>
</dbReference>
<dbReference type="InterPro" id="IPR001261">
    <property type="entry name" value="ArgE/DapE_CS"/>
</dbReference>
<dbReference type="InterPro" id="IPR036264">
    <property type="entry name" value="Bact_exopeptidase_dim_dom"/>
</dbReference>
<dbReference type="InterPro" id="IPR002933">
    <property type="entry name" value="Peptidase_M20"/>
</dbReference>
<dbReference type="InterPro" id="IPR011650">
    <property type="entry name" value="Peptidase_M20_dimer"/>
</dbReference>
<dbReference type="InterPro" id="IPR050072">
    <property type="entry name" value="Peptidase_M20A"/>
</dbReference>
<dbReference type="NCBIfam" id="TIGR01892">
    <property type="entry name" value="AcOrn-deacetyl"/>
    <property type="match status" value="1"/>
</dbReference>
<dbReference type="NCBIfam" id="NF003474">
    <property type="entry name" value="PRK05111.1"/>
    <property type="match status" value="1"/>
</dbReference>
<dbReference type="PANTHER" id="PTHR43808">
    <property type="entry name" value="ACETYLORNITHINE DEACETYLASE"/>
    <property type="match status" value="1"/>
</dbReference>
<dbReference type="PANTHER" id="PTHR43808:SF1">
    <property type="entry name" value="ACETYLORNITHINE DEACETYLASE"/>
    <property type="match status" value="1"/>
</dbReference>
<dbReference type="Pfam" id="PF07687">
    <property type="entry name" value="M20_dimer"/>
    <property type="match status" value="1"/>
</dbReference>
<dbReference type="Pfam" id="PF01546">
    <property type="entry name" value="Peptidase_M20"/>
    <property type="match status" value="1"/>
</dbReference>
<dbReference type="SUPFAM" id="SSF55031">
    <property type="entry name" value="Bacterial exopeptidase dimerisation domain"/>
    <property type="match status" value="1"/>
</dbReference>
<dbReference type="SUPFAM" id="SSF53187">
    <property type="entry name" value="Zn-dependent exopeptidases"/>
    <property type="match status" value="1"/>
</dbReference>
<dbReference type="PROSITE" id="PS00758">
    <property type="entry name" value="ARGE_DAPE_CPG2_1"/>
    <property type="match status" value="1"/>
</dbReference>
<dbReference type="PROSITE" id="PS00759">
    <property type="entry name" value="ARGE_DAPE_CPG2_2"/>
    <property type="match status" value="1"/>
</dbReference>
<evidence type="ECO:0000255" key="1">
    <source>
        <dbReference type="HAMAP-Rule" id="MF_01108"/>
    </source>
</evidence>
<accession>Q66G73</accession>
<feature type="chain" id="PRO_1000065068" description="Acetylornithine deacetylase">
    <location>
        <begin position="1"/>
        <end position="389"/>
    </location>
</feature>
<feature type="active site" evidence="1">
    <location>
        <position position="87"/>
    </location>
</feature>
<feature type="active site" evidence="1">
    <location>
        <position position="149"/>
    </location>
</feature>
<feature type="binding site" evidence="1">
    <location>
        <position position="85"/>
    </location>
    <ligand>
        <name>Zn(2+)</name>
        <dbReference type="ChEBI" id="CHEBI:29105"/>
        <label>1</label>
    </ligand>
</feature>
<feature type="binding site" evidence="1">
    <location>
        <position position="117"/>
    </location>
    <ligand>
        <name>Zn(2+)</name>
        <dbReference type="ChEBI" id="CHEBI:29105"/>
        <label>1</label>
    </ligand>
</feature>
<feature type="binding site" evidence="1">
    <location>
        <position position="117"/>
    </location>
    <ligand>
        <name>Zn(2+)</name>
        <dbReference type="ChEBI" id="CHEBI:29105"/>
        <label>2</label>
    </ligand>
</feature>
<feature type="binding site" evidence="1">
    <location>
        <position position="150"/>
    </location>
    <ligand>
        <name>Zn(2+)</name>
        <dbReference type="ChEBI" id="CHEBI:29105"/>
        <label>2</label>
    </ligand>
</feature>
<feature type="binding site" evidence="1">
    <location>
        <position position="174"/>
    </location>
    <ligand>
        <name>Zn(2+)</name>
        <dbReference type="ChEBI" id="CHEBI:29105"/>
        <label>1</label>
    </ligand>
</feature>
<feature type="binding site" evidence="1">
    <location>
        <position position="360"/>
    </location>
    <ligand>
        <name>Zn(2+)</name>
        <dbReference type="ChEBI" id="CHEBI:29105"/>
        <label>2</label>
    </ligand>
</feature>
<proteinExistence type="inferred from homology"/>
<sequence length="389" mass="42950">MKMKLPPFIELYRALIATPSISAADSALDQSNEALINLLAGWFADLGFRVEIQPVPDTRHKFNLLASIGENENGEGHGGLLLAGHTDTVPYDEGRWTRDPFTLTEHDHKLYGLGTADMKGFFAFILDAVRDIDASKLTKPLYILATADEETTMAGARYFAANTQLRPDFAIIGEPTSLQPVRAHKGHISNAIRITGQSGHSSDPARGVNAIDLMHESITQLMALRTTLQERYHNPAFTIPYPTMNFGHINGGDAANRICACCELHMDIRPLPGLTLSDLNELMTEALEPVSQRWPGRLSIDELHPPIPGYECPTDHHMVGVIEKLLGERTAVVNYCTEAPFIQQVCPTLVLGPGSINQAHQPDEFIDMAFIEPTRELIGQLVDHFCQQK</sequence>
<organism>
    <name type="scientific">Yersinia pseudotuberculosis serotype I (strain IP32953)</name>
    <dbReference type="NCBI Taxonomy" id="273123"/>
    <lineage>
        <taxon>Bacteria</taxon>
        <taxon>Pseudomonadati</taxon>
        <taxon>Pseudomonadota</taxon>
        <taxon>Gammaproteobacteria</taxon>
        <taxon>Enterobacterales</taxon>
        <taxon>Yersiniaceae</taxon>
        <taxon>Yersinia</taxon>
    </lineage>
</organism>
<name>ARGE_YERPS</name>
<keyword id="KW-0028">Amino-acid biosynthesis</keyword>
<keyword id="KW-0055">Arginine biosynthesis</keyword>
<keyword id="KW-0170">Cobalt</keyword>
<keyword id="KW-0963">Cytoplasm</keyword>
<keyword id="KW-0378">Hydrolase</keyword>
<keyword id="KW-0479">Metal-binding</keyword>
<keyword id="KW-0862">Zinc</keyword>